<evidence type="ECO:0000255" key="1">
    <source>
        <dbReference type="HAMAP-Rule" id="MF_00129"/>
    </source>
</evidence>
<dbReference type="EMBL" id="AP009552">
    <property type="protein sequence ID" value="BAG05320.1"/>
    <property type="molecule type" value="Genomic_DNA"/>
</dbReference>
<dbReference type="RefSeq" id="WP_012267812.1">
    <property type="nucleotide sequence ID" value="NC_010296.1"/>
</dbReference>
<dbReference type="SMR" id="B0JGQ4"/>
<dbReference type="STRING" id="449447.MAE_54980"/>
<dbReference type="PaxDb" id="449447-MAE_54980"/>
<dbReference type="EnsemblBacteria" id="BAG05320">
    <property type="protein sequence ID" value="BAG05320"/>
    <property type="gene ID" value="MAE_54980"/>
</dbReference>
<dbReference type="KEGG" id="mar:MAE_54980"/>
<dbReference type="PATRIC" id="fig|449447.4.peg.5016"/>
<dbReference type="eggNOG" id="COG0445">
    <property type="taxonomic scope" value="Bacteria"/>
</dbReference>
<dbReference type="HOGENOM" id="CLU_007831_2_2_3"/>
<dbReference type="BioCyc" id="MAER449447:MAE_RS23900-MONOMER"/>
<dbReference type="Proteomes" id="UP000001510">
    <property type="component" value="Chromosome"/>
</dbReference>
<dbReference type="GO" id="GO:0005737">
    <property type="term" value="C:cytoplasm"/>
    <property type="evidence" value="ECO:0007669"/>
    <property type="project" value="UniProtKB-SubCell"/>
</dbReference>
<dbReference type="GO" id="GO:0050660">
    <property type="term" value="F:flavin adenine dinucleotide binding"/>
    <property type="evidence" value="ECO:0007669"/>
    <property type="project" value="UniProtKB-UniRule"/>
</dbReference>
<dbReference type="GO" id="GO:0030488">
    <property type="term" value="P:tRNA methylation"/>
    <property type="evidence" value="ECO:0007669"/>
    <property type="project" value="TreeGrafter"/>
</dbReference>
<dbReference type="GO" id="GO:0002098">
    <property type="term" value="P:tRNA wobble uridine modification"/>
    <property type="evidence" value="ECO:0007669"/>
    <property type="project" value="InterPro"/>
</dbReference>
<dbReference type="FunFam" id="1.10.10.1800:FF:000001">
    <property type="entry name" value="tRNA uridine 5-carboxymethylaminomethyl modification enzyme MnmG"/>
    <property type="match status" value="1"/>
</dbReference>
<dbReference type="FunFam" id="1.10.150.570:FF:000001">
    <property type="entry name" value="tRNA uridine 5-carboxymethylaminomethyl modification enzyme MnmG"/>
    <property type="match status" value="1"/>
</dbReference>
<dbReference type="FunFam" id="3.50.50.60:FF:000094">
    <property type="entry name" value="tRNA uridine 5-carboxymethylaminomethyl modification enzyme MnmG"/>
    <property type="match status" value="1"/>
</dbReference>
<dbReference type="FunFam" id="3.50.50.60:FF:000119">
    <property type="entry name" value="tRNA uridine 5-carboxymethylaminomethyl modification enzyme MnmG"/>
    <property type="match status" value="1"/>
</dbReference>
<dbReference type="Gene3D" id="3.50.50.60">
    <property type="entry name" value="FAD/NAD(P)-binding domain"/>
    <property type="match status" value="2"/>
</dbReference>
<dbReference type="Gene3D" id="1.10.150.570">
    <property type="entry name" value="GidA associated domain, C-terminal subdomain"/>
    <property type="match status" value="1"/>
</dbReference>
<dbReference type="Gene3D" id="1.10.10.1800">
    <property type="entry name" value="tRNA uridine 5-carboxymethylaminomethyl modification enzyme MnmG/GidA"/>
    <property type="match status" value="1"/>
</dbReference>
<dbReference type="HAMAP" id="MF_00129">
    <property type="entry name" value="MnmG_GidA"/>
    <property type="match status" value="1"/>
</dbReference>
<dbReference type="InterPro" id="IPR036188">
    <property type="entry name" value="FAD/NAD-bd_sf"/>
</dbReference>
<dbReference type="InterPro" id="IPR049312">
    <property type="entry name" value="GIDA_C_N"/>
</dbReference>
<dbReference type="InterPro" id="IPR004416">
    <property type="entry name" value="MnmG"/>
</dbReference>
<dbReference type="InterPro" id="IPR002218">
    <property type="entry name" value="MnmG-rel"/>
</dbReference>
<dbReference type="InterPro" id="IPR020595">
    <property type="entry name" value="MnmG-rel_CS"/>
</dbReference>
<dbReference type="InterPro" id="IPR026904">
    <property type="entry name" value="MnmG_C"/>
</dbReference>
<dbReference type="InterPro" id="IPR047001">
    <property type="entry name" value="MnmG_C_subdom"/>
</dbReference>
<dbReference type="InterPro" id="IPR044920">
    <property type="entry name" value="MnmG_C_subdom_sf"/>
</dbReference>
<dbReference type="InterPro" id="IPR040131">
    <property type="entry name" value="MnmG_N"/>
</dbReference>
<dbReference type="NCBIfam" id="TIGR00136">
    <property type="entry name" value="mnmG_gidA"/>
    <property type="match status" value="1"/>
</dbReference>
<dbReference type="PANTHER" id="PTHR11806">
    <property type="entry name" value="GLUCOSE INHIBITED DIVISION PROTEIN A"/>
    <property type="match status" value="1"/>
</dbReference>
<dbReference type="PANTHER" id="PTHR11806:SF0">
    <property type="entry name" value="PROTEIN MTO1 HOMOLOG, MITOCHONDRIAL"/>
    <property type="match status" value="1"/>
</dbReference>
<dbReference type="Pfam" id="PF01134">
    <property type="entry name" value="GIDA"/>
    <property type="match status" value="1"/>
</dbReference>
<dbReference type="Pfam" id="PF21680">
    <property type="entry name" value="GIDA_C_1st"/>
    <property type="match status" value="1"/>
</dbReference>
<dbReference type="Pfam" id="PF13932">
    <property type="entry name" value="SAM_GIDA_C"/>
    <property type="match status" value="1"/>
</dbReference>
<dbReference type="SMART" id="SM01228">
    <property type="entry name" value="GIDA_assoc_3"/>
    <property type="match status" value="1"/>
</dbReference>
<dbReference type="SUPFAM" id="SSF51905">
    <property type="entry name" value="FAD/NAD(P)-binding domain"/>
    <property type="match status" value="1"/>
</dbReference>
<dbReference type="PROSITE" id="PS01280">
    <property type="entry name" value="GIDA_1"/>
    <property type="match status" value="1"/>
</dbReference>
<dbReference type="PROSITE" id="PS01281">
    <property type="entry name" value="GIDA_2"/>
    <property type="match status" value="1"/>
</dbReference>
<sequence length="635" mass="70699">MTFSSAADFQDEFDVIVVGAGHSGCEAALACARLGCRTLLLTLNLDKIAWQPCNPAVGGPAKSQLTHEVDALGGEIGKMADRTYLQKRVLNASRGPAVWALRAQTDKREYAAVMKGIVETQANLVIREAMATDLILGANEQVLGVETYFGTCFAAKAVILTTGTFLGGKIWIGGKSMAAGRAGEFAAVGLTETLNRLGFETGRLKTGTPARVDKRSVDYSRMEPQPPDDEVRWFSFDPEVWIEREQMNCHLTRTTAATHQLIRDNLHLSPIYGGFIDSKGPRYCPSIEDKIVRFADKESHQIFIEPEGRDIPELYIQGFSTGLPENVQLAMLRTLPGLENCVMLRAAYAVEYDYLPATQCYPTLMTKKIEGLFCAGQINGTTGYEEAAAQGLVAGINAARFALGKELIVFPREESYLGTLVDDLCTKDLREPYRMLTSRSEYRLVLRSDNADQRLTPLGREIGLIDNRRWQLFQSKQANIIAEKERLHETRIKERDQVAIAIVKDTEQKIKGSLSLADLLRRPSLHYLDLDRYGLGNPDINLAEREGVEIEIKYSGYLKRQQNQIDQISRHSNRHLSPDIDYMKIETLSMESREKLTKIKPATIGQASRIGGVNPADINALLVYLEMRQMSAVKS</sequence>
<proteinExistence type="inferred from homology"/>
<feature type="chain" id="PRO_1000076322" description="tRNA uridine 5-carboxymethylaminomethyl modification enzyme MnmG">
    <location>
        <begin position="1"/>
        <end position="635"/>
    </location>
</feature>
<feature type="binding site" evidence="1">
    <location>
        <begin position="19"/>
        <end position="24"/>
    </location>
    <ligand>
        <name>FAD</name>
        <dbReference type="ChEBI" id="CHEBI:57692"/>
    </ligand>
</feature>
<feature type="binding site" evidence="1">
    <location>
        <begin position="280"/>
        <end position="294"/>
    </location>
    <ligand>
        <name>NAD(+)</name>
        <dbReference type="ChEBI" id="CHEBI:57540"/>
    </ligand>
</feature>
<name>MNMG_MICAN</name>
<reference key="1">
    <citation type="journal article" date="2007" name="DNA Res.">
        <title>Complete genomic structure of the bloom-forming toxic cyanobacterium Microcystis aeruginosa NIES-843.</title>
        <authorList>
            <person name="Kaneko T."/>
            <person name="Nakajima N."/>
            <person name="Okamoto S."/>
            <person name="Suzuki I."/>
            <person name="Tanabe Y."/>
            <person name="Tamaoki M."/>
            <person name="Nakamura Y."/>
            <person name="Kasai F."/>
            <person name="Watanabe A."/>
            <person name="Kawashima K."/>
            <person name="Kishida Y."/>
            <person name="Ono A."/>
            <person name="Shimizu Y."/>
            <person name="Takahashi C."/>
            <person name="Minami C."/>
            <person name="Fujishiro T."/>
            <person name="Kohara M."/>
            <person name="Katoh M."/>
            <person name="Nakazaki N."/>
            <person name="Nakayama S."/>
            <person name="Yamada M."/>
            <person name="Tabata S."/>
            <person name="Watanabe M.M."/>
        </authorList>
    </citation>
    <scope>NUCLEOTIDE SEQUENCE [LARGE SCALE GENOMIC DNA]</scope>
    <source>
        <strain>NIES-843 / IAM M-247</strain>
    </source>
</reference>
<organism>
    <name type="scientific">Microcystis aeruginosa (strain NIES-843 / IAM M-2473)</name>
    <dbReference type="NCBI Taxonomy" id="449447"/>
    <lineage>
        <taxon>Bacteria</taxon>
        <taxon>Bacillati</taxon>
        <taxon>Cyanobacteriota</taxon>
        <taxon>Cyanophyceae</taxon>
        <taxon>Oscillatoriophycideae</taxon>
        <taxon>Chroococcales</taxon>
        <taxon>Microcystaceae</taxon>
        <taxon>Microcystis</taxon>
    </lineage>
</organism>
<comment type="function">
    <text evidence="1">NAD-binding protein involved in the addition of a carboxymethylaminomethyl (cmnm) group at the wobble position (U34) of certain tRNAs, forming tRNA-cmnm(5)s(2)U34.</text>
</comment>
<comment type="cofactor">
    <cofactor evidence="1">
        <name>FAD</name>
        <dbReference type="ChEBI" id="CHEBI:57692"/>
    </cofactor>
</comment>
<comment type="subunit">
    <text evidence="1">Homodimer. Heterotetramer of two MnmE and two MnmG subunits.</text>
</comment>
<comment type="subcellular location">
    <subcellularLocation>
        <location evidence="1">Cytoplasm</location>
    </subcellularLocation>
</comment>
<comment type="similarity">
    <text evidence="1">Belongs to the MnmG family.</text>
</comment>
<protein>
    <recommendedName>
        <fullName evidence="1">tRNA uridine 5-carboxymethylaminomethyl modification enzyme MnmG</fullName>
    </recommendedName>
    <alternativeName>
        <fullName evidence="1">Glucose-inhibited division protein A</fullName>
    </alternativeName>
</protein>
<accession>B0JGQ4</accession>
<gene>
    <name evidence="1" type="primary">mnmG</name>
    <name evidence="1" type="synonym">gidA</name>
    <name type="ordered locus">MAE_54980</name>
</gene>
<keyword id="KW-0963">Cytoplasm</keyword>
<keyword id="KW-0274">FAD</keyword>
<keyword id="KW-0285">Flavoprotein</keyword>
<keyword id="KW-0520">NAD</keyword>
<keyword id="KW-0819">tRNA processing</keyword>